<gene>
    <name evidence="1" type="primary">rplO</name>
    <name type="ordered locus">Smed_1005</name>
</gene>
<dbReference type="EMBL" id="CP000738">
    <property type="protein sequence ID" value="ABR59858.1"/>
    <property type="molecule type" value="Genomic_DNA"/>
</dbReference>
<dbReference type="RefSeq" id="WP_011975184.1">
    <property type="nucleotide sequence ID" value="NC_009636.1"/>
</dbReference>
<dbReference type="RefSeq" id="YP_001326693.1">
    <property type="nucleotide sequence ID" value="NC_009636.1"/>
</dbReference>
<dbReference type="SMR" id="A6U878"/>
<dbReference type="STRING" id="366394.Smed_1005"/>
<dbReference type="GeneID" id="61614911"/>
<dbReference type="KEGG" id="smd:Smed_1005"/>
<dbReference type="PATRIC" id="fig|366394.8.peg.4126"/>
<dbReference type="eggNOG" id="COG0200">
    <property type="taxonomic scope" value="Bacteria"/>
</dbReference>
<dbReference type="HOGENOM" id="CLU_055188_4_0_5"/>
<dbReference type="OrthoDB" id="9810293at2"/>
<dbReference type="Proteomes" id="UP000001108">
    <property type="component" value="Chromosome"/>
</dbReference>
<dbReference type="GO" id="GO:0022625">
    <property type="term" value="C:cytosolic large ribosomal subunit"/>
    <property type="evidence" value="ECO:0007669"/>
    <property type="project" value="TreeGrafter"/>
</dbReference>
<dbReference type="GO" id="GO:0019843">
    <property type="term" value="F:rRNA binding"/>
    <property type="evidence" value="ECO:0007669"/>
    <property type="project" value="UniProtKB-UniRule"/>
</dbReference>
<dbReference type="GO" id="GO:0003735">
    <property type="term" value="F:structural constituent of ribosome"/>
    <property type="evidence" value="ECO:0007669"/>
    <property type="project" value="InterPro"/>
</dbReference>
<dbReference type="GO" id="GO:0006412">
    <property type="term" value="P:translation"/>
    <property type="evidence" value="ECO:0007669"/>
    <property type="project" value="UniProtKB-UniRule"/>
</dbReference>
<dbReference type="Gene3D" id="3.100.10.10">
    <property type="match status" value="1"/>
</dbReference>
<dbReference type="HAMAP" id="MF_01341">
    <property type="entry name" value="Ribosomal_uL15"/>
    <property type="match status" value="1"/>
</dbReference>
<dbReference type="InterPro" id="IPR030878">
    <property type="entry name" value="Ribosomal_uL15"/>
</dbReference>
<dbReference type="InterPro" id="IPR021131">
    <property type="entry name" value="Ribosomal_uL15/eL18"/>
</dbReference>
<dbReference type="InterPro" id="IPR036227">
    <property type="entry name" value="Ribosomal_uL15/eL18_sf"/>
</dbReference>
<dbReference type="InterPro" id="IPR005749">
    <property type="entry name" value="Ribosomal_uL15_bac-type"/>
</dbReference>
<dbReference type="InterPro" id="IPR001196">
    <property type="entry name" value="Ribosomal_uL15_CS"/>
</dbReference>
<dbReference type="NCBIfam" id="TIGR01071">
    <property type="entry name" value="rplO_bact"/>
    <property type="match status" value="1"/>
</dbReference>
<dbReference type="PANTHER" id="PTHR12934">
    <property type="entry name" value="50S RIBOSOMAL PROTEIN L15"/>
    <property type="match status" value="1"/>
</dbReference>
<dbReference type="PANTHER" id="PTHR12934:SF11">
    <property type="entry name" value="LARGE RIBOSOMAL SUBUNIT PROTEIN UL15M"/>
    <property type="match status" value="1"/>
</dbReference>
<dbReference type="Pfam" id="PF00828">
    <property type="entry name" value="Ribosomal_L27A"/>
    <property type="match status" value="1"/>
</dbReference>
<dbReference type="SUPFAM" id="SSF52080">
    <property type="entry name" value="Ribosomal proteins L15p and L18e"/>
    <property type="match status" value="1"/>
</dbReference>
<dbReference type="PROSITE" id="PS00475">
    <property type="entry name" value="RIBOSOMAL_L15"/>
    <property type="match status" value="1"/>
</dbReference>
<organism>
    <name type="scientific">Sinorhizobium medicae (strain WSM419)</name>
    <name type="common">Ensifer medicae</name>
    <dbReference type="NCBI Taxonomy" id="366394"/>
    <lineage>
        <taxon>Bacteria</taxon>
        <taxon>Pseudomonadati</taxon>
        <taxon>Pseudomonadota</taxon>
        <taxon>Alphaproteobacteria</taxon>
        <taxon>Hyphomicrobiales</taxon>
        <taxon>Rhizobiaceae</taxon>
        <taxon>Sinorhizobium/Ensifer group</taxon>
        <taxon>Sinorhizobium</taxon>
    </lineage>
</organism>
<keyword id="KW-0687">Ribonucleoprotein</keyword>
<keyword id="KW-0689">Ribosomal protein</keyword>
<keyword id="KW-0694">RNA-binding</keyword>
<keyword id="KW-0699">rRNA-binding</keyword>
<feature type="chain" id="PRO_1000054546" description="Large ribosomal subunit protein uL15">
    <location>
        <begin position="1"/>
        <end position="156"/>
    </location>
</feature>
<feature type="region of interest" description="Disordered" evidence="2">
    <location>
        <begin position="1"/>
        <end position="41"/>
    </location>
</feature>
<feature type="compositionally biased region" description="Basic and acidic residues" evidence="2">
    <location>
        <begin position="1"/>
        <end position="13"/>
    </location>
</feature>
<feature type="compositionally biased region" description="Gly residues" evidence="2">
    <location>
        <begin position="21"/>
        <end position="35"/>
    </location>
</feature>
<name>RL15_SINMW</name>
<comment type="function">
    <text evidence="1">Binds to the 23S rRNA.</text>
</comment>
<comment type="subunit">
    <text evidence="1">Part of the 50S ribosomal subunit.</text>
</comment>
<comment type="similarity">
    <text evidence="1">Belongs to the universal ribosomal protein uL15 family.</text>
</comment>
<accession>A6U878</accession>
<protein>
    <recommendedName>
        <fullName evidence="1">Large ribosomal subunit protein uL15</fullName>
    </recommendedName>
    <alternativeName>
        <fullName evidence="3">50S ribosomal protein L15</fullName>
    </alternativeName>
</protein>
<sequence length="156" mass="16243">MKLNEIKDNEGATKNRKRLGRGIGSGSGKTAGRGVKGQKARSGVSINGFEGGQMPIYRRLPKRGFNNIFASEFVVVSLGRIQAAVDAKKLDASKTVDAAALKAAGVIRRVKDGVRVLADGELKAKVSLEVAGASKPAIEKIEKAGGSIKLLSAAAE</sequence>
<reference key="1">
    <citation type="submission" date="2007-06" db="EMBL/GenBank/DDBJ databases">
        <title>Complete sequence of Sinorhizobium medicae WSM419 chromosome.</title>
        <authorList>
            <consortium name="US DOE Joint Genome Institute"/>
            <person name="Copeland A."/>
            <person name="Lucas S."/>
            <person name="Lapidus A."/>
            <person name="Barry K."/>
            <person name="Glavina del Rio T."/>
            <person name="Dalin E."/>
            <person name="Tice H."/>
            <person name="Pitluck S."/>
            <person name="Chain P."/>
            <person name="Malfatti S."/>
            <person name="Shin M."/>
            <person name="Vergez L."/>
            <person name="Schmutz J."/>
            <person name="Larimer F."/>
            <person name="Land M."/>
            <person name="Hauser L."/>
            <person name="Kyrpides N."/>
            <person name="Mikhailova N."/>
            <person name="Reeve W.G."/>
            <person name="Richardson P."/>
        </authorList>
    </citation>
    <scope>NUCLEOTIDE SEQUENCE [LARGE SCALE GENOMIC DNA]</scope>
    <source>
        <strain>WSM419</strain>
    </source>
</reference>
<proteinExistence type="inferred from homology"/>
<evidence type="ECO:0000255" key="1">
    <source>
        <dbReference type="HAMAP-Rule" id="MF_01341"/>
    </source>
</evidence>
<evidence type="ECO:0000256" key="2">
    <source>
        <dbReference type="SAM" id="MobiDB-lite"/>
    </source>
</evidence>
<evidence type="ECO:0000305" key="3"/>